<feature type="chain" id="PRO_0000256105" description="ATP synthase subunit alpha 1">
    <location>
        <begin position="1"/>
        <end position="517"/>
    </location>
</feature>
<feature type="binding site" evidence="1">
    <location>
        <begin position="174"/>
        <end position="181"/>
    </location>
    <ligand>
        <name>ATP</name>
        <dbReference type="ChEBI" id="CHEBI:30616"/>
    </ligand>
</feature>
<feature type="site" description="Required for activity" evidence="1">
    <location>
        <position position="378"/>
    </location>
</feature>
<organism>
    <name type="scientific">Albidiferax ferrireducens (strain ATCC BAA-621 / DSM 15236 / T118)</name>
    <name type="common">Rhodoferax ferrireducens</name>
    <dbReference type="NCBI Taxonomy" id="338969"/>
    <lineage>
        <taxon>Bacteria</taxon>
        <taxon>Pseudomonadati</taxon>
        <taxon>Pseudomonadota</taxon>
        <taxon>Betaproteobacteria</taxon>
        <taxon>Burkholderiales</taxon>
        <taxon>Comamonadaceae</taxon>
        <taxon>Rhodoferax</taxon>
    </lineage>
</organism>
<reference key="1">
    <citation type="submission" date="2006-02" db="EMBL/GenBank/DDBJ databases">
        <title>Complete sequence of chromosome of Rhodoferax ferrireducens DSM 15236.</title>
        <authorList>
            <person name="Copeland A."/>
            <person name="Lucas S."/>
            <person name="Lapidus A."/>
            <person name="Barry K."/>
            <person name="Detter J.C."/>
            <person name="Glavina del Rio T."/>
            <person name="Hammon N."/>
            <person name="Israni S."/>
            <person name="Pitluck S."/>
            <person name="Brettin T."/>
            <person name="Bruce D."/>
            <person name="Han C."/>
            <person name="Tapia R."/>
            <person name="Gilna P."/>
            <person name="Kiss H."/>
            <person name="Schmutz J."/>
            <person name="Larimer F."/>
            <person name="Land M."/>
            <person name="Kyrpides N."/>
            <person name="Ivanova N."/>
            <person name="Richardson P."/>
        </authorList>
    </citation>
    <scope>NUCLEOTIDE SEQUENCE [LARGE SCALE GENOMIC DNA]</scope>
    <source>
        <strain>ATCC BAA-621 / DSM 15236 / T118</strain>
    </source>
</reference>
<protein>
    <recommendedName>
        <fullName evidence="1">ATP synthase subunit alpha 1</fullName>
        <ecNumber evidence="1">7.1.2.2</ecNumber>
    </recommendedName>
    <alternativeName>
        <fullName evidence="1">ATP synthase F1 sector subunit alpha 1</fullName>
    </alternativeName>
    <alternativeName>
        <fullName evidence="1">F-ATPase subunit alpha 1</fullName>
    </alternativeName>
</protein>
<gene>
    <name evidence="1" type="primary">atpA1</name>
    <name type="ordered locus">Rfer_0108</name>
</gene>
<name>ATPA1_ALBFT</name>
<evidence type="ECO:0000255" key="1">
    <source>
        <dbReference type="HAMAP-Rule" id="MF_01346"/>
    </source>
</evidence>
<sequence length="517" mass="55288">MQLNPAEISELIKSRIEGLTAGANIRNQGTVVSVTDGIVRIHGLSDVMQGEMLEFPADAEGQPSYGLALNLERDSVGAVILGAYEHISEGNTVKCTGRILEVPVGPELKGRVVNALGQPIDGKGPIDAKMTDVIEKVAPGVIARQSVSQPMQTGLKSIDSMVPVGRGQRELIIGDRQTGKTAVAIDAIINQKGQNMTCVYVAIGQKASSVKNVVRSLEQAGAMEYTIVVAATASESAAMQYVAAYSGCTMGEYFRDRGEDALIVYDDLSKQAVAYRQVSLLLRRPPGREAYPGDVFYLHSRLLERAARVNEKYVEDFTKGAVKGKTGSLTALPIIETQAGDVSAFVPTNVISITDGQIFLETSLFNAGIRPAINAGISVSRVGGAAQTKLIKNLSGGIRTDLAQYRELAAFAQFASDLDEATRKQLERGARVTELLKQAQYSPLPISLMGATLFAVNKGYLDDIAVNKLLSFEHGLHGYLKDKHAALLAKLEADKAMDKDAEAELNAATAAFKKSFA</sequence>
<accession>Q223D4</accession>
<keyword id="KW-0066">ATP synthesis</keyword>
<keyword id="KW-0067">ATP-binding</keyword>
<keyword id="KW-0997">Cell inner membrane</keyword>
<keyword id="KW-1003">Cell membrane</keyword>
<keyword id="KW-0139">CF(1)</keyword>
<keyword id="KW-0375">Hydrogen ion transport</keyword>
<keyword id="KW-0406">Ion transport</keyword>
<keyword id="KW-0472">Membrane</keyword>
<keyword id="KW-0547">Nucleotide-binding</keyword>
<keyword id="KW-1185">Reference proteome</keyword>
<keyword id="KW-1278">Translocase</keyword>
<keyword id="KW-0813">Transport</keyword>
<comment type="function">
    <text evidence="1">Produces ATP from ADP in the presence of a proton gradient across the membrane. The alpha chain is a regulatory subunit.</text>
</comment>
<comment type="catalytic activity">
    <reaction evidence="1">
        <text>ATP + H2O + 4 H(+)(in) = ADP + phosphate + 5 H(+)(out)</text>
        <dbReference type="Rhea" id="RHEA:57720"/>
        <dbReference type="ChEBI" id="CHEBI:15377"/>
        <dbReference type="ChEBI" id="CHEBI:15378"/>
        <dbReference type="ChEBI" id="CHEBI:30616"/>
        <dbReference type="ChEBI" id="CHEBI:43474"/>
        <dbReference type="ChEBI" id="CHEBI:456216"/>
        <dbReference type="EC" id="7.1.2.2"/>
    </reaction>
</comment>
<comment type="subunit">
    <text evidence="1">F-type ATPases have 2 components, CF(1) - the catalytic core - and CF(0) - the membrane proton channel. CF(1) has five subunits: alpha(3), beta(3), gamma(1), delta(1), epsilon(1). CF(0) has three main subunits: a(1), b(2) and c(9-12). The alpha and beta chains form an alternating ring which encloses part of the gamma chain. CF(1) is attached to CF(0) by a central stalk formed by the gamma and epsilon chains, while a peripheral stalk is formed by the delta and b chains.</text>
</comment>
<comment type="subcellular location">
    <subcellularLocation>
        <location evidence="1">Cell inner membrane</location>
        <topology evidence="1">Peripheral membrane protein</topology>
    </subcellularLocation>
</comment>
<comment type="similarity">
    <text evidence="1">Belongs to the ATPase alpha/beta chains family.</text>
</comment>
<dbReference type="EC" id="7.1.2.2" evidence="1"/>
<dbReference type="EMBL" id="CP000267">
    <property type="protein sequence ID" value="ABD67869.1"/>
    <property type="molecule type" value="Genomic_DNA"/>
</dbReference>
<dbReference type="RefSeq" id="WP_011462442.1">
    <property type="nucleotide sequence ID" value="NC_007908.1"/>
</dbReference>
<dbReference type="SMR" id="Q223D4"/>
<dbReference type="STRING" id="338969.Rfer_0108"/>
<dbReference type="KEGG" id="rfr:Rfer_0108"/>
<dbReference type="eggNOG" id="COG0056">
    <property type="taxonomic scope" value="Bacteria"/>
</dbReference>
<dbReference type="HOGENOM" id="CLU_010091_2_1_4"/>
<dbReference type="OrthoDB" id="9803053at2"/>
<dbReference type="Proteomes" id="UP000008332">
    <property type="component" value="Chromosome"/>
</dbReference>
<dbReference type="GO" id="GO:0005886">
    <property type="term" value="C:plasma membrane"/>
    <property type="evidence" value="ECO:0007669"/>
    <property type="project" value="UniProtKB-SubCell"/>
</dbReference>
<dbReference type="GO" id="GO:0045259">
    <property type="term" value="C:proton-transporting ATP synthase complex"/>
    <property type="evidence" value="ECO:0007669"/>
    <property type="project" value="UniProtKB-KW"/>
</dbReference>
<dbReference type="GO" id="GO:0043531">
    <property type="term" value="F:ADP binding"/>
    <property type="evidence" value="ECO:0007669"/>
    <property type="project" value="TreeGrafter"/>
</dbReference>
<dbReference type="GO" id="GO:0005524">
    <property type="term" value="F:ATP binding"/>
    <property type="evidence" value="ECO:0007669"/>
    <property type="project" value="UniProtKB-UniRule"/>
</dbReference>
<dbReference type="GO" id="GO:0046933">
    <property type="term" value="F:proton-transporting ATP synthase activity, rotational mechanism"/>
    <property type="evidence" value="ECO:0007669"/>
    <property type="project" value="UniProtKB-UniRule"/>
</dbReference>
<dbReference type="CDD" id="cd18113">
    <property type="entry name" value="ATP-synt_F1_alpha_C"/>
    <property type="match status" value="1"/>
</dbReference>
<dbReference type="CDD" id="cd18116">
    <property type="entry name" value="ATP-synt_F1_alpha_N"/>
    <property type="match status" value="1"/>
</dbReference>
<dbReference type="CDD" id="cd01132">
    <property type="entry name" value="F1-ATPase_alpha_CD"/>
    <property type="match status" value="1"/>
</dbReference>
<dbReference type="FunFam" id="1.20.150.20:FF:000001">
    <property type="entry name" value="ATP synthase subunit alpha"/>
    <property type="match status" value="1"/>
</dbReference>
<dbReference type="FunFam" id="2.40.30.20:FF:000001">
    <property type="entry name" value="ATP synthase subunit alpha"/>
    <property type="match status" value="1"/>
</dbReference>
<dbReference type="FunFam" id="3.40.50.300:FF:000002">
    <property type="entry name" value="ATP synthase subunit alpha"/>
    <property type="match status" value="1"/>
</dbReference>
<dbReference type="Gene3D" id="2.40.30.20">
    <property type="match status" value="1"/>
</dbReference>
<dbReference type="Gene3D" id="1.20.150.20">
    <property type="entry name" value="ATP synthase alpha/beta chain, C-terminal domain"/>
    <property type="match status" value="1"/>
</dbReference>
<dbReference type="Gene3D" id="3.40.50.300">
    <property type="entry name" value="P-loop containing nucleotide triphosphate hydrolases"/>
    <property type="match status" value="1"/>
</dbReference>
<dbReference type="HAMAP" id="MF_01346">
    <property type="entry name" value="ATP_synth_alpha_bact"/>
    <property type="match status" value="1"/>
</dbReference>
<dbReference type="InterPro" id="IPR023366">
    <property type="entry name" value="ATP_synth_asu-like_sf"/>
</dbReference>
<dbReference type="InterPro" id="IPR000793">
    <property type="entry name" value="ATP_synth_asu_C"/>
</dbReference>
<dbReference type="InterPro" id="IPR038376">
    <property type="entry name" value="ATP_synth_asu_C_sf"/>
</dbReference>
<dbReference type="InterPro" id="IPR033732">
    <property type="entry name" value="ATP_synth_F1_a_nt-bd_dom"/>
</dbReference>
<dbReference type="InterPro" id="IPR005294">
    <property type="entry name" value="ATP_synth_F1_asu"/>
</dbReference>
<dbReference type="InterPro" id="IPR020003">
    <property type="entry name" value="ATPase_a/bsu_AS"/>
</dbReference>
<dbReference type="InterPro" id="IPR004100">
    <property type="entry name" value="ATPase_F1/V1/A1_a/bsu_N"/>
</dbReference>
<dbReference type="InterPro" id="IPR036121">
    <property type="entry name" value="ATPase_F1/V1/A1_a/bsu_N_sf"/>
</dbReference>
<dbReference type="InterPro" id="IPR000194">
    <property type="entry name" value="ATPase_F1/V1/A1_a/bsu_nucl-bd"/>
</dbReference>
<dbReference type="InterPro" id="IPR027417">
    <property type="entry name" value="P-loop_NTPase"/>
</dbReference>
<dbReference type="NCBIfam" id="TIGR00962">
    <property type="entry name" value="atpA"/>
    <property type="match status" value="1"/>
</dbReference>
<dbReference type="NCBIfam" id="NF009884">
    <property type="entry name" value="PRK13343.1"/>
    <property type="match status" value="1"/>
</dbReference>
<dbReference type="PANTHER" id="PTHR48082">
    <property type="entry name" value="ATP SYNTHASE SUBUNIT ALPHA, MITOCHONDRIAL"/>
    <property type="match status" value="1"/>
</dbReference>
<dbReference type="PANTHER" id="PTHR48082:SF2">
    <property type="entry name" value="ATP SYNTHASE SUBUNIT ALPHA, MITOCHONDRIAL"/>
    <property type="match status" value="1"/>
</dbReference>
<dbReference type="Pfam" id="PF00006">
    <property type="entry name" value="ATP-synt_ab"/>
    <property type="match status" value="1"/>
</dbReference>
<dbReference type="Pfam" id="PF00306">
    <property type="entry name" value="ATP-synt_ab_C"/>
    <property type="match status" value="1"/>
</dbReference>
<dbReference type="Pfam" id="PF02874">
    <property type="entry name" value="ATP-synt_ab_N"/>
    <property type="match status" value="1"/>
</dbReference>
<dbReference type="PIRSF" id="PIRSF039088">
    <property type="entry name" value="F_ATPase_subunit_alpha"/>
    <property type="match status" value="1"/>
</dbReference>
<dbReference type="SUPFAM" id="SSF47917">
    <property type="entry name" value="C-terminal domain of alpha and beta subunits of F1 ATP synthase"/>
    <property type="match status" value="1"/>
</dbReference>
<dbReference type="SUPFAM" id="SSF50615">
    <property type="entry name" value="N-terminal domain of alpha and beta subunits of F1 ATP synthase"/>
    <property type="match status" value="1"/>
</dbReference>
<dbReference type="SUPFAM" id="SSF52540">
    <property type="entry name" value="P-loop containing nucleoside triphosphate hydrolases"/>
    <property type="match status" value="1"/>
</dbReference>
<dbReference type="PROSITE" id="PS00152">
    <property type="entry name" value="ATPASE_ALPHA_BETA"/>
    <property type="match status" value="1"/>
</dbReference>
<proteinExistence type="inferred from homology"/>